<proteinExistence type="inferred from homology"/>
<reference key="1">
    <citation type="journal article" date="2011" name="J. Bacteriol.">
        <title>Genome of Ochrobactrum anthropi ATCC 49188 T, a versatile opportunistic pathogen and symbiont of several eukaryotic hosts.</title>
        <authorList>
            <person name="Chain P.S."/>
            <person name="Lang D.M."/>
            <person name="Comerci D.J."/>
            <person name="Malfatti S.A."/>
            <person name="Vergez L.M."/>
            <person name="Shin M."/>
            <person name="Ugalde R.A."/>
            <person name="Garcia E."/>
            <person name="Tolmasky M.E."/>
        </authorList>
    </citation>
    <scope>NUCLEOTIDE SEQUENCE [LARGE SCALE GENOMIC DNA]</scope>
    <source>
        <strain>ATCC 49188 / DSM 6882 / CCUG 24695 / JCM 21032 / LMG 3331 / NBRC 15819 / NCTC 12168 / Alc 37</strain>
    </source>
</reference>
<accession>A6WX30</accession>
<dbReference type="EC" id="4.2.1.20" evidence="1"/>
<dbReference type="EMBL" id="CP000758">
    <property type="protein sequence ID" value="ABS13534.1"/>
    <property type="molecule type" value="Genomic_DNA"/>
</dbReference>
<dbReference type="RefSeq" id="WP_012091041.1">
    <property type="nucleotide sequence ID" value="NC_009667.1"/>
</dbReference>
<dbReference type="SMR" id="A6WX30"/>
<dbReference type="STRING" id="439375.Oant_0812"/>
<dbReference type="KEGG" id="oan:Oant_0812"/>
<dbReference type="PATRIC" id="fig|439375.7.peg.857"/>
<dbReference type="eggNOG" id="COG0159">
    <property type="taxonomic scope" value="Bacteria"/>
</dbReference>
<dbReference type="HOGENOM" id="CLU_016734_0_0_5"/>
<dbReference type="PhylomeDB" id="A6WX30"/>
<dbReference type="UniPathway" id="UPA00035">
    <property type="reaction ID" value="UER00044"/>
</dbReference>
<dbReference type="Proteomes" id="UP000002301">
    <property type="component" value="Chromosome 1"/>
</dbReference>
<dbReference type="GO" id="GO:0005829">
    <property type="term" value="C:cytosol"/>
    <property type="evidence" value="ECO:0007669"/>
    <property type="project" value="TreeGrafter"/>
</dbReference>
<dbReference type="GO" id="GO:0004834">
    <property type="term" value="F:tryptophan synthase activity"/>
    <property type="evidence" value="ECO:0007669"/>
    <property type="project" value="UniProtKB-UniRule"/>
</dbReference>
<dbReference type="CDD" id="cd04724">
    <property type="entry name" value="Tryptophan_synthase_alpha"/>
    <property type="match status" value="1"/>
</dbReference>
<dbReference type="FunFam" id="3.20.20.70:FF:000037">
    <property type="entry name" value="Tryptophan synthase alpha chain"/>
    <property type="match status" value="1"/>
</dbReference>
<dbReference type="Gene3D" id="3.20.20.70">
    <property type="entry name" value="Aldolase class I"/>
    <property type="match status" value="1"/>
</dbReference>
<dbReference type="HAMAP" id="MF_00131">
    <property type="entry name" value="Trp_synth_alpha"/>
    <property type="match status" value="1"/>
</dbReference>
<dbReference type="InterPro" id="IPR013785">
    <property type="entry name" value="Aldolase_TIM"/>
</dbReference>
<dbReference type="InterPro" id="IPR011060">
    <property type="entry name" value="RibuloseP-bd_barrel"/>
</dbReference>
<dbReference type="InterPro" id="IPR018204">
    <property type="entry name" value="Trp_synthase_alpha_AS"/>
</dbReference>
<dbReference type="InterPro" id="IPR002028">
    <property type="entry name" value="Trp_synthase_suA"/>
</dbReference>
<dbReference type="NCBIfam" id="TIGR00262">
    <property type="entry name" value="trpA"/>
    <property type="match status" value="1"/>
</dbReference>
<dbReference type="PANTHER" id="PTHR43406:SF1">
    <property type="entry name" value="TRYPTOPHAN SYNTHASE ALPHA CHAIN, CHLOROPLASTIC"/>
    <property type="match status" value="1"/>
</dbReference>
<dbReference type="PANTHER" id="PTHR43406">
    <property type="entry name" value="TRYPTOPHAN SYNTHASE, ALPHA CHAIN"/>
    <property type="match status" value="1"/>
</dbReference>
<dbReference type="Pfam" id="PF00290">
    <property type="entry name" value="Trp_syntA"/>
    <property type="match status" value="1"/>
</dbReference>
<dbReference type="SUPFAM" id="SSF51366">
    <property type="entry name" value="Ribulose-phoshate binding barrel"/>
    <property type="match status" value="1"/>
</dbReference>
<dbReference type="PROSITE" id="PS00167">
    <property type="entry name" value="TRP_SYNTHASE_ALPHA"/>
    <property type="match status" value="1"/>
</dbReference>
<evidence type="ECO:0000255" key="1">
    <source>
        <dbReference type="HAMAP-Rule" id="MF_00131"/>
    </source>
</evidence>
<organism>
    <name type="scientific">Brucella anthropi (strain ATCC 49188 / DSM 6882 / CCUG 24695 / JCM 21032 / LMG 3331 / NBRC 15819 / NCTC 12168 / Alc 37)</name>
    <name type="common">Ochrobactrum anthropi</name>
    <dbReference type="NCBI Taxonomy" id="439375"/>
    <lineage>
        <taxon>Bacteria</taxon>
        <taxon>Pseudomonadati</taxon>
        <taxon>Pseudomonadota</taxon>
        <taxon>Alphaproteobacteria</taxon>
        <taxon>Hyphomicrobiales</taxon>
        <taxon>Brucellaceae</taxon>
        <taxon>Brucella/Ochrobactrum group</taxon>
        <taxon>Brucella</taxon>
    </lineage>
</organism>
<keyword id="KW-0028">Amino-acid biosynthesis</keyword>
<keyword id="KW-0057">Aromatic amino acid biosynthesis</keyword>
<keyword id="KW-0456">Lyase</keyword>
<keyword id="KW-1185">Reference proteome</keyword>
<keyword id="KW-0822">Tryptophan biosynthesis</keyword>
<protein>
    <recommendedName>
        <fullName evidence="1">Tryptophan synthase alpha chain</fullName>
        <ecNumber evidence="1">4.2.1.20</ecNumber>
    </recommendedName>
</protein>
<feature type="chain" id="PRO_1000018242" description="Tryptophan synthase alpha chain">
    <location>
        <begin position="1"/>
        <end position="279"/>
    </location>
</feature>
<feature type="active site" description="Proton acceptor" evidence="1">
    <location>
        <position position="50"/>
    </location>
</feature>
<feature type="active site" description="Proton acceptor" evidence="1">
    <location>
        <position position="61"/>
    </location>
</feature>
<sequence>MTTRIDTKFAELKAEGRPALVTYFMGGDPDLETSLKVMKALPKAGADVIELGMPFSDPMADGPAIQAAGLRALNAGQTLAKTLHMAAEFRKEDNTTPIVMMGYYNPIYIYGVERFLADAKASGVDGLIVVDLPSEMDAELCIPAMKAGINFIRLTTPTTDDKRLPKVLHNSSGFVYYVSMNGITGSAIADTAKVGEAVRHIKKSTDLPICVGFGVKTPEQAAAIATHADGVVVGTAIVNAIAGELDENGKAKGDPVAAATRLVHALAESVRATRLEAAQ</sequence>
<gene>
    <name evidence="1" type="primary">trpA</name>
    <name type="ordered locus">Oant_0812</name>
</gene>
<comment type="function">
    <text evidence="1">The alpha subunit is responsible for the aldol cleavage of indoleglycerol phosphate to indole and glyceraldehyde 3-phosphate.</text>
</comment>
<comment type="catalytic activity">
    <reaction evidence="1">
        <text>(1S,2R)-1-C-(indol-3-yl)glycerol 3-phosphate + L-serine = D-glyceraldehyde 3-phosphate + L-tryptophan + H2O</text>
        <dbReference type="Rhea" id="RHEA:10532"/>
        <dbReference type="ChEBI" id="CHEBI:15377"/>
        <dbReference type="ChEBI" id="CHEBI:33384"/>
        <dbReference type="ChEBI" id="CHEBI:57912"/>
        <dbReference type="ChEBI" id="CHEBI:58866"/>
        <dbReference type="ChEBI" id="CHEBI:59776"/>
        <dbReference type="EC" id="4.2.1.20"/>
    </reaction>
</comment>
<comment type="pathway">
    <text evidence="1">Amino-acid biosynthesis; L-tryptophan biosynthesis; L-tryptophan from chorismate: step 5/5.</text>
</comment>
<comment type="subunit">
    <text evidence="1">Tetramer of two alpha and two beta chains.</text>
</comment>
<comment type="similarity">
    <text evidence="1">Belongs to the TrpA family.</text>
</comment>
<name>TRPA_BRUA4</name>